<accession>P0A362</accession>
<accession>O85593</accession>
<accession>Q0WDN0</accession>
<comment type="subcellular location">
    <subcellularLocation>
        <location evidence="1">Cytoplasm</location>
    </subcellularLocation>
</comment>
<comment type="sequence caution" evidence="2">
    <conflict type="erroneous initiation">
        <sequence resource="EMBL-CDS" id="AAM84805"/>
    </conflict>
</comment>
<comment type="sequence caution" evidence="2">
    <conflict type="erroneous initiation">
        <sequence resource="EMBL-CDS" id="AAS62660"/>
    </conflict>
</comment>
<evidence type="ECO:0000250" key="1"/>
<evidence type="ECO:0000305" key="2"/>
<name>CSPB_YERPE</name>
<keyword id="KW-0010">Activator</keyword>
<keyword id="KW-0963">Cytoplasm</keyword>
<keyword id="KW-0238">DNA-binding</keyword>
<keyword id="KW-1185">Reference proteome</keyword>
<keyword id="KW-0804">Transcription</keyword>
<keyword id="KW-0805">Transcription regulation</keyword>
<gene>
    <name type="primary">cspB</name>
    <name type="synonym">cspG</name>
    <name type="ordered locus">YPO2659</name>
    <name type="ordered locus">y1230</name>
    <name type="ordered locus">YP_2460</name>
</gene>
<feature type="chain" id="PRO_0000100345" description="Cold shock-like protein CspB">
    <location>
        <begin position="1"/>
        <end position="70"/>
    </location>
</feature>
<feature type="domain" description="CSD">
    <location>
        <begin position="7"/>
        <end position="67"/>
    </location>
</feature>
<organism>
    <name type="scientific">Yersinia pestis</name>
    <dbReference type="NCBI Taxonomy" id="632"/>
    <lineage>
        <taxon>Bacteria</taxon>
        <taxon>Pseudomonadati</taxon>
        <taxon>Pseudomonadota</taxon>
        <taxon>Gammaproteobacteria</taxon>
        <taxon>Enterobacterales</taxon>
        <taxon>Yersiniaceae</taxon>
        <taxon>Yersinia</taxon>
    </lineage>
</organism>
<proteinExistence type="inferred from homology"/>
<sequence length="70" mass="7511">MSNKMTGLVKWFDAGKGFGFISPADGSKDVFVHFSAIQGNDYKTLDEGQNVEFSIEQGQKGPSAVNVVAL</sequence>
<dbReference type="EMBL" id="AL590842">
    <property type="protein sequence ID" value="CAL21278.1"/>
    <property type="molecule type" value="Genomic_DNA"/>
</dbReference>
<dbReference type="EMBL" id="AE009952">
    <property type="protein sequence ID" value="AAM84805.1"/>
    <property type="status" value="ALT_INIT"/>
    <property type="molecule type" value="Genomic_DNA"/>
</dbReference>
<dbReference type="EMBL" id="AE017042">
    <property type="protein sequence ID" value="AAS62660.1"/>
    <property type="status" value="ALT_INIT"/>
    <property type="molecule type" value="Genomic_DNA"/>
</dbReference>
<dbReference type="PIR" id="AC0324">
    <property type="entry name" value="AC0324"/>
</dbReference>
<dbReference type="RefSeq" id="YP_002347608.1">
    <property type="nucleotide sequence ID" value="NC_003143.1"/>
</dbReference>
<dbReference type="SMR" id="P0A362"/>
<dbReference type="STRING" id="214092.YPO2659"/>
<dbReference type="PaxDb" id="214092-YPO2659"/>
<dbReference type="DNASU" id="1146177"/>
<dbReference type="EnsemblBacteria" id="AAS62660">
    <property type="protein sequence ID" value="AAS62660"/>
    <property type="gene ID" value="YP_2460"/>
</dbReference>
<dbReference type="KEGG" id="ype:YPO2659"/>
<dbReference type="KEGG" id="ypj:CH55_1513"/>
<dbReference type="KEGG" id="ypk:y1230"/>
<dbReference type="KEGG" id="ypl:CH46_2451"/>
<dbReference type="KEGG" id="ypm:YP_2460"/>
<dbReference type="KEGG" id="ypv:BZ15_875"/>
<dbReference type="KEGG" id="ypw:CH59_3538"/>
<dbReference type="PATRIC" id="fig|214092.21.peg.3091"/>
<dbReference type="eggNOG" id="COG1278">
    <property type="taxonomic scope" value="Bacteria"/>
</dbReference>
<dbReference type="HOGENOM" id="CLU_117621_2_1_6"/>
<dbReference type="OMA" id="RAIQTQG"/>
<dbReference type="OrthoDB" id="9810590at2"/>
<dbReference type="Proteomes" id="UP000000815">
    <property type="component" value="Chromosome"/>
</dbReference>
<dbReference type="Proteomes" id="UP000001019">
    <property type="component" value="Chromosome"/>
</dbReference>
<dbReference type="Proteomes" id="UP000002490">
    <property type="component" value="Chromosome"/>
</dbReference>
<dbReference type="GO" id="GO:0005829">
    <property type="term" value="C:cytosol"/>
    <property type="evidence" value="ECO:0007669"/>
    <property type="project" value="UniProtKB-ARBA"/>
</dbReference>
<dbReference type="GO" id="GO:0003677">
    <property type="term" value="F:DNA binding"/>
    <property type="evidence" value="ECO:0007669"/>
    <property type="project" value="UniProtKB-KW"/>
</dbReference>
<dbReference type="GO" id="GO:0003676">
    <property type="term" value="F:nucleic acid binding"/>
    <property type="evidence" value="ECO:0000318"/>
    <property type="project" value="GO_Central"/>
</dbReference>
<dbReference type="GO" id="GO:0010468">
    <property type="term" value="P:regulation of gene expression"/>
    <property type="evidence" value="ECO:0000318"/>
    <property type="project" value="GO_Central"/>
</dbReference>
<dbReference type="CDD" id="cd04458">
    <property type="entry name" value="CSP_CDS"/>
    <property type="match status" value="1"/>
</dbReference>
<dbReference type="FunFam" id="2.40.50.140:FF:000006">
    <property type="entry name" value="Cold shock protein CspC"/>
    <property type="match status" value="1"/>
</dbReference>
<dbReference type="Gene3D" id="2.40.50.140">
    <property type="entry name" value="Nucleic acid-binding proteins"/>
    <property type="match status" value="1"/>
</dbReference>
<dbReference type="InterPro" id="IPR012156">
    <property type="entry name" value="Cold_shock_CspA"/>
</dbReference>
<dbReference type="InterPro" id="IPR050181">
    <property type="entry name" value="Cold_shock_domain"/>
</dbReference>
<dbReference type="InterPro" id="IPR011129">
    <property type="entry name" value="CSD"/>
</dbReference>
<dbReference type="InterPro" id="IPR019844">
    <property type="entry name" value="CSD_CS"/>
</dbReference>
<dbReference type="InterPro" id="IPR002059">
    <property type="entry name" value="CSP_DNA-bd"/>
</dbReference>
<dbReference type="InterPro" id="IPR012340">
    <property type="entry name" value="NA-bd_OB-fold"/>
</dbReference>
<dbReference type="NCBIfam" id="NF007679">
    <property type="entry name" value="PRK10354.1"/>
    <property type="match status" value="1"/>
</dbReference>
<dbReference type="PANTHER" id="PTHR11544">
    <property type="entry name" value="COLD SHOCK DOMAIN CONTAINING PROTEINS"/>
    <property type="match status" value="1"/>
</dbReference>
<dbReference type="Pfam" id="PF00313">
    <property type="entry name" value="CSD"/>
    <property type="match status" value="1"/>
</dbReference>
<dbReference type="PIRSF" id="PIRSF002599">
    <property type="entry name" value="Cold_shock_A"/>
    <property type="match status" value="1"/>
</dbReference>
<dbReference type="PRINTS" id="PR00050">
    <property type="entry name" value="COLDSHOCK"/>
</dbReference>
<dbReference type="SMART" id="SM00357">
    <property type="entry name" value="CSP"/>
    <property type="match status" value="1"/>
</dbReference>
<dbReference type="SUPFAM" id="SSF50249">
    <property type="entry name" value="Nucleic acid-binding proteins"/>
    <property type="match status" value="1"/>
</dbReference>
<dbReference type="PROSITE" id="PS00352">
    <property type="entry name" value="CSD_1"/>
    <property type="match status" value="1"/>
</dbReference>
<dbReference type="PROSITE" id="PS51857">
    <property type="entry name" value="CSD_2"/>
    <property type="match status" value="1"/>
</dbReference>
<reference key="1">
    <citation type="journal article" date="2001" name="Nature">
        <title>Genome sequence of Yersinia pestis, the causative agent of plague.</title>
        <authorList>
            <person name="Parkhill J."/>
            <person name="Wren B.W."/>
            <person name="Thomson N.R."/>
            <person name="Titball R.W."/>
            <person name="Holden M.T.G."/>
            <person name="Prentice M.B."/>
            <person name="Sebaihia M."/>
            <person name="James K.D."/>
            <person name="Churcher C.M."/>
            <person name="Mungall K.L."/>
            <person name="Baker S."/>
            <person name="Basham D."/>
            <person name="Bentley S.D."/>
            <person name="Brooks K."/>
            <person name="Cerdeno-Tarraga A.-M."/>
            <person name="Chillingworth T."/>
            <person name="Cronin A."/>
            <person name="Davies R.M."/>
            <person name="Davis P."/>
            <person name="Dougan G."/>
            <person name="Feltwell T."/>
            <person name="Hamlin N."/>
            <person name="Holroyd S."/>
            <person name="Jagels K."/>
            <person name="Karlyshev A.V."/>
            <person name="Leather S."/>
            <person name="Moule S."/>
            <person name="Oyston P.C.F."/>
            <person name="Quail M.A."/>
            <person name="Rutherford K.M."/>
            <person name="Simmonds M."/>
            <person name="Skelton J."/>
            <person name="Stevens K."/>
            <person name="Whitehead S."/>
            <person name="Barrell B.G."/>
        </authorList>
    </citation>
    <scope>NUCLEOTIDE SEQUENCE [LARGE SCALE GENOMIC DNA]</scope>
    <source>
        <strain>CO-92 / Biovar Orientalis</strain>
    </source>
</reference>
<reference key="2">
    <citation type="journal article" date="2002" name="J. Bacteriol.">
        <title>Genome sequence of Yersinia pestis KIM.</title>
        <authorList>
            <person name="Deng W."/>
            <person name="Burland V."/>
            <person name="Plunkett G. III"/>
            <person name="Boutin A."/>
            <person name="Mayhew G.F."/>
            <person name="Liss P."/>
            <person name="Perna N.T."/>
            <person name="Rose D.J."/>
            <person name="Mau B."/>
            <person name="Zhou S."/>
            <person name="Schwartz D.C."/>
            <person name="Fetherston J.D."/>
            <person name="Lindler L.E."/>
            <person name="Brubaker R.R."/>
            <person name="Plano G.V."/>
            <person name="Straley S.C."/>
            <person name="McDonough K.A."/>
            <person name="Nilles M.L."/>
            <person name="Matson J.S."/>
            <person name="Blattner F.R."/>
            <person name="Perry R.D."/>
        </authorList>
    </citation>
    <scope>NUCLEOTIDE SEQUENCE [LARGE SCALE GENOMIC DNA]</scope>
    <source>
        <strain>KIM10+ / Biovar Mediaevalis</strain>
    </source>
</reference>
<reference key="3">
    <citation type="journal article" date="2004" name="DNA Res.">
        <title>Complete genome sequence of Yersinia pestis strain 91001, an isolate avirulent to humans.</title>
        <authorList>
            <person name="Song Y."/>
            <person name="Tong Z."/>
            <person name="Wang J."/>
            <person name="Wang L."/>
            <person name="Guo Z."/>
            <person name="Han Y."/>
            <person name="Zhang J."/>
            <person name="Pei D."/>
            <person name="Zhou D."/>
            <person name="Qin H."/>
            <person name="Pang X."/>
            <person name="Han Y."/>
            <person name="Zhai J."/>
            <person name="Li M."/>
            <person name="Cui B."/>
            <person name="Qi Z."/>
            <person name="Jin L."/>
            <person name="Dai R."/>
            <person name="Chen F."/>
            <person name="Li S."/>
            <person name="Ye C."/>
            <person name="Du Z."/>
            <person name="Lin W."/>
            <person name="Wang J."/>
            <person name="Yu J."/>
            <person name="Yang H."/>
            <person name="Wang J."/>
            <person name="Huang P."/>
            <person name="Yang R."/>
        </authorList>
    </citation>
    <scope>NUCLEOTIDE SEQUENCE [LARGE SCALE GENOMIC DNA]</scope>
    <source>
        <strain>91001 / Biovar Mediaevalis</strain>
    </source>
</reference>
<protein>
    <recommendedName>
        <fullName>Cold shock-like protein CspB</fullName>
    </recommendedName>
</protein>